<feature type="chain" id="PRO_0000408646" description="Probable endonuclease lcl3">
    <location>
        <begin position="1"/>
        <end position="275"/>
    </location>
</feature>
<feature type="transmembrane region" description="Helical" evidence="2">
    <location>
        <begin position="41"/>
        <end position="57"/>
    </location>
</feature>
<feature type="domain" description="TNase-like" evidence="3">
    <location>
        <begin position="79"/>
        <end position="247"/>
    </location>
</feature>
<feature type="region of interest" description="Disordered" evidence="4">
    <location>
        <begin position="1"/>
        <end position="25"/>
    </location>
</feature>
<feature type="compositionally biased region" description="Low complexity" evidence="4">
    <location>
        <begin position="14"/>
        <end position="25"/>
    </location>
</feature>
<feature type="active site" evidence="3">
    <location>
        <position position="130"/>
    </location>
</feature>
<feature type="active site" evidence="3">
    <location>
        <position position="138"/>
    </location>
</feature>
<feature type="active site" evidence="3">
    <location>
        <position position="178"/>
    </location>
</feature>
<feature type="binding site" evidence="3">
    <location>
        <position position="135"/>
    </location>
    <ligand>
        <name>Ca(2+)</name>
        <dbReference type="ChEBI" id="CHEBI:29108"/>
    </ligand>
</feature>
<gene>
    <name type="primary">lcl3</name>
    <name type="ORF">An01g04700</name>
</gene>
<comment type="subcellular location">
    <subcellularLocation>
        <location>Mitochondrion</location>
    </subcellularLocation>
    <subcellularLocation>
        <location evidence="1">Membrane</location>
        <topology evidence="1">Single-pass membrane protein</topology>
    </subcellularLocation>
</comment>
<comment type="similarity">
    <text evidence="5">Belongs to the LCL3 family.</text>
</comment>
<organism>
    <name type="scientific">Aspergillus niger (strain ATCC MYA-4892 / CBS 513.88 / FGSC A1513)</name>
    <dbReference type="NCBI Taxonomy" id="425011"/>
    <lineage>
        <taxon>Eukaryota</taxon>
        <taxon>Fungi</taxon>
        <taxon>Dikarya</taxon>
        <taxon>Ascomycota</taxon>
        <taxon>Pezizomycotina</taxon>
        <taxon>Eurotiomycetes</taxon>
        <taxon>Eurotiomycetidae</taxon>
        <taxon>Eurotiales</taxon>
        <taxon>Aspergillaceae</taxon>
        <taxon>Aspergillus</taxon>
        <taxon>Aspergillus subgen. Circumdati</taxon>
    </lineage>
</organism>
<name>LCL3_ASPNC</name>
<sequence length="275" mass="31814">MRWPPWASNTQASNNDHPTTTNNNDPKNLLDWSAFTELRTLIPTLVLTTGILSAFTLHRNYLRRFPTAVNITPAYYRRRSILGKVTSVGDGDNFRIYHTPGGRLAGWGWVPWKKVPTTRKELRDQTIHVRIAGVDAPEQAHFGRPAQPFGKEAHEWLTGYLINRRVRIYVHRQDQYQRVVATVFVRRALDFPVPFRRRDVGYEMLRKGLATVYEAKVGAEFGGEVMEKKYRSAEWWAKARGLGLWKGFKKNRDAWESPREFKTRTGMEDVGDGKK</sequence>
<evidence type="ECO:0000250" key="1"/>
<evidence type="ECO:0000255" key="2"/>
<evidence type="ECO:0000255" key="3">
    <source>
        <dbReference type="PROSITE-ProRule" id="PRU00272"/>
    </source>
</evidence>
<evidence type="ECO:0000256" key="4">
    <source>
        <dbReference type="SAM" id="MobiDB-lite"/>
    </source>
</evidence>
<evidence type="ECO:0000305" key="5"/>
<proteinExistence type="inferred from homology"/>
<accession>A2Q8K8</accession>
<reference key="1">
    <citation type="journal article" date="2007" name="Nat. Biotechnol.">
        <title>Genome sequencing and analysis of the versatile cell factory Aspergillus niger CBS 513.88.</title>
        <authorList>
            <person name="Pel H.J."/>
            <person name="de Winde J.H."/>
            <person name="Archer D.B."/>
            <person name="Dyer P.S."/>
            <person name="Hofmann G."/>
            <person name="Schaap P.J."/>
            <person name="Turner G."/>
            <person name="de Vries R.P."/>
            <person name="Albang R."/>
            <person name="Albermann K."/>
            <person name="Andersen M.R."/>
            <person name="Bendtsen J.D."/>
            <person name="Benen J.A.E."/>
            <person name="van den Berg M."/>
            <person name="Breestraat S."/>
            <person name="Caddick M.X."/>
            <person name="Contreras R."/>
            <person name="Cornell M."/>
            <person name="Coutinho P.M."/>
            <person name="Danchin E.G.J."/>
            <person name="Debets A.J.M."/>
            <person name="Dekker P."/>
            <person name="van Dijck P.W.M."/>
            <person name="van Dijk A."/>
            <person name="Dijkhuizen L."/>
            <person name="Driessen A.J.M."/>
            <person name="d'Enfert C."/>
            <person name="Geysens S."/>
            <person name="Goosen C."/>
            <person name="Groot G.S.P."/>
            <person name="de Groot P.W.J."/>
            <person name="Guillemette T."/>
            <person name="Henrissat B."/>
            <person name="Herweijer M."/>
            <person name="van den Hombergh J.P.T.W."/>
            <person name="van den Hondel C.A.M.J.J."/>
            <person name="van der Heijden R.T.J.M."/>
            <person name="van der Kaaij R.M."/>
            <person name="Klis F.M."/>
            <person name="Kools H.J."/>
            <person name="Kubicek C.P."/>
            <person name="van Kuyk P.A."/>
            <person name="Lauber J."/>
            <person name="Lu X."/>
            <person name="van der Maarel M.J.E.C."/>
            <person name="Meulenberg R."/>
            <person name="Menke H."/>
            <person name="Mortimer M.A."/>
            <person name="Nielsen J."/>
            <person name="Oliver S.G."/>
            <person name="Olsthoorn M."/>
            <person name="Pal K."/>
            <person name="van Peij N.N.M.E."/>
            <person name="Ram A.F.J."/>
            <person name="Rinas U."/>
            <person name="Roubos J.A."/>
            <person name="Sagt C.M.J."/>
            <person name="Schmoll M."/>
            <person name="Sun J."/>
            <person name="Ussery D."/>
            <person name="Varga J."/>
            <person name="Vervecken W."/>
            <person name="van de Vondervoort P.J.J."/>
            <person name="Wedler H."/>
            <person name="Woesten H.A.B."/>
            <person name="Zeng A.-P."/>
            <person name="van Ooyen A.J.J."/>
            <person name="Visser J."/>
            <person name="Stam H."/>
        </authorList>
    </citation>
    <scope>NUCLEOTIDE SEQUENCE [LARGE SCALE GENOMIC DNA]</scope>
    <source>
        <strain>ATCC MYA-4892 / CBS 513.88 / FGSC A1513</strain>
    </source>
</reference>
<protein>
    <recommendedName>
        <fullName>Probable endonuclease lcl3</fullName>
        <ecNumber>3.1.-.-</ecNumber>
    </recommendedName>
</protein>
<keyword id="KW-0106">Calcium</keyword>
<keyword id="KW-0255">Endonuclease</keyword>
<keyword id="KW-0378">Hydrolase</keyword>
<keyword id="KW-0472">Membrane</keyword>
<keyword id="KW-0479">Metal-binding</keyword>
<keyword id="KW-0496">Mitochondrion</keyword>
<keyword id="KW-0540">Nuclease</keyword>
<keyword id="KW-1185">Reference proteome</keyword>
<keyword id="KW-0812">Transmembrane</keyword>
<keyword id="KW-1133">Transmembrane helix</keyword>
<dbReference type="EC" id="3.1.-.-"/>
<dbReference type="EMBL" id="AM269963">
    <property type="protein sequence ID" value="CAK37005.1"/>
    <property type="molecule type" value="Genomic_DNA"/>
</dbReference>
<dbReference type="RefSeq" id="XP_001388897.1">
    <property type="nucleotide sequence ID" value="XM_001388860.1"/>
</dbReference>
<dbReference type="SMR" id="A2Q8K8"/>
<dbReference type="EnsemblFungi" id="CAK37005">
    <property type="protein sequence ID" value="CAK37005"/>
    <property type="gene ID" value="An01g04700"/>
</dbReference>
<dbReference type="GeneID" id="4977593"/>
<dbReference type="KEGG" id="ang:An01g04700"/>
<dbReference type="VEuPathDB" id="FungiDB:An01g04700"/>
<dbReference type="HOGENOM" id="CLU_046484_0_1_1"/>
<dbReference type="Proteomes" id="UP000006706">
    <property type="component" value="Chromosome 2R"/>
</dbReference>
<dbReference type="GO" id="GO:0016020">
    <property type="term" value="C:membrane"/>
    <property type="evidence" value="ECO:0007669"/>
    <property type="project" value="UniProtKB-SubCell"/>
</dbReference>
<dbReference type="GO" id="GO:0005739">
    <property type="term" value="C:mitochondrion"/>
    <property type="evidence" value="ECO:0007669"/>
    <property type="project" value="UniProtKB-SubCell"/>
</dbReference>
<dbReference type="GO" id="GO:0004519">
    <property type="term" value="F:endonuclease activity"/>
    <property type="evidence" value="ECO:0007669"/>
    <property type="project" value="UniProtKB-KW"/>
</dbReference>
<dbReference type="GO" id="GO:0046872">
    <property type="term" value="F:metal ion binding"/>
    <property type="evidence" value="ECO:0007669"/>
    <property type="project" value="UniProtKB-KW"/>
</dbReference>
<dbReference type="FunFam" id="2.40.50.90:FF:000029">
    <property type="entry name" value="Probable endonuclease lcl3"/>
    <property type="match status" value="1"/>
</dbReference>
<dbReference type="Gene3D" id="2.40.50.90">
    <property type="match status" value="1"/>
</dbReference>
<dbReference type="InterPro" id="IPR035437">
    <property type="entry name" value="SNase_OB-fold_sf"/>
</dbReference>
<dbReference type="InterPro" id="IPR016071">
    <property type="entry name" value="Staphylococal_nuclease_OB-fold"/>
</dbReference>
<dbReference type="PANTHER" id="PTHR12302">
    <property type="entry name" value="EBNA2 BINDING PROTEIN P100"/>
    <property type="match status" value="1"/>
</dbReference>
<dbReference type="PANTHER" id="PTHR12302:SF3">
    <property type="entry name" value="SERINE_THREONINE-PROTEIN KINASE 31"/>
    <property type="match status" value="1"/>
</dbReference>
<dbReference type="Pfam" id="PF00565">
    <property type="entry name" value="SNase"/>
    <property type="match status" value="1"/>
</dbReference>
<dbReference type="SMART" id="SM00318">
    <property type="entry name" value="SNc"/>
    <property type="match status" value="1"/>
</dbReference>
<dbReference type="SUPFAM" id="SSF50199">
    <property type="entry name" value="Staphylococcal nuclease"/>
    <property type="match status" value="1"/>
</dbReference>
<dbReference type="PROSITE" id="PS50830">
    <property type="entry name" value="TNASE_3"/>
    <property type="match status" value="1"/>
</dbReference>